<comment type="interaction">
    <interactant intactId="EBI-6139214">
        <id>O95661</id>
    </interactant>
    <interactant intactId="EBI-16439278">
        <id>Q6FHY5</id>
        <label>MEOX2</label>
    </interactant>
    <organismsDiffer>false</organismsDiffer>
    <experiments>3</experiments>
</comment>
<comment type="interaction">
    <interactant intactId="EBI-6139214">
        <id>O95661</id>
    </interactant>
    <interactant intactId="EBI-518675">
        <id>P40763</id>
        <label>STAT3</label>
    </interactant>
    <organismsDiffer>false</organismsDiffer>
    <experiments>3</experiments>
</comment>
<comment type="subcellular location">
    <subcellularLocation>
        <location evidence="4">Cell membrane</location>
        <topology evidence="4">Lipid-anchor</topology>
        <orientation evidence="4">Cytoplasmic side</orientation>
    </subcellularLocation>
</comment>
<comment type="tissue specificity">
    <text>Expressed in normal ovarian and breast epithelial cells but not in ovarian and breast cancers.</text>
</comment>
<comment type="similarity">
    <text evidence="4">Belongs to the small GTPase superfamily. Di-Ras family.</text>
</comment>
<comment type="online information" name="Wikipedia">
    <link uri="https://en.wikipedia.org/wiki/NOEY2"/>
    <text>NOEY2 entry</text>
</comment>
<comment type="online information" name="Atlas of Genetics and Cytogenetics in Oncology and Haematology">
    <link uri="https://atlasgeneticsoncology.org/gene/702/DIRAS3"/>
</comment>
<proteinExistence type="evidence at protein level"/>
<accession>O95661</accession>
<accession>B3KMP3</accession>
<protein>
    <recommendedName>
        <fullName>GTP-binding protein Di-Ras3</fullName>
    </recommendedName>
    <alternativeName>
        <fullName>Distinct subgroup of the Ras family member 3</fullName>
    </alternativeName>
    <alternativeName>
        <fullName>Rho-related GTP-binding protein RhoI</fullName>
    </alternativeName>
</protein>
<organism>
    <name type="scientific">Homo sapiens</name>
    <name type="common">Human</name>
    <dbReference type="NCBI Taxonomy" id="9606"/>
    <lineage>
        <taxon>Eukaryota</taxon>
        <taxon>Metazoa</taxon>
        <taxon>Chordata</taxon>
        <taxon>Craniata</taxon>
        <taxon>Vertebrata</taxon>
        <taxon>Euteleostomi</taxon>
        <taxon>Mammalia</taxon>
        <taxon>Eutheria</taxon>
        <taxon>Euarchontoglires</taxon>
        <taxon>Primates</taxon>
        <taxon>Haplorrhini</taxon>
        <taxon>Catarrhini</taxon>
        <taxon>Hominidae</taxon>
        <taxon>Homo</taxon>
    </lineage>
</organism>
<name>DIRA3_HUMAN</name>
<keyword id="KW-0002">3D-structure</keyword>
<keyword id="KW-1003">Cell membrane</keyword>
<keyword id="KW-0342">GTP-binding</keyword>
<keyword id="KW-0449">Lipoprotein</keyword>
<keyword id="KW-0472">Membrane</keyword>
<keyword id="KW-0488">Methylation</keyword>
<keyword id="KW-0547">Nucleotide-binding</keyword>
<keyword id="KW-0636">Prenylation</keyword>
<keyword id="KW-1267">Proteomics identification</keyword>
<keyword id="KW-1185">Reference proteome</keyword>
<feature type="chain" id="PRO_0000191654" description="GTP-binding protein Di-Ras3">
    <location>
        <begin position="1"/>
        <end position="226"/>
    </location>
</feature>
<feature type="propeptide" id="PRO_0000370781" description="Removed in mature form" evidence="3">
    <location>
        <begin position="227"/>
        <end position="229"/>
    </location>
</feature>
<feature type="short sequence motif" description="Effector region" evidence="3">
    <location>
        <begin position="66"/>
        <end position="74"/>
    </location>
</feature>
<feature type="binding site" evidence="2">
    <location>
        <begin position="44"/>
        <end position="51"/>
    </location>
    <ligand>
        <name>GTP</name>
        <dbReference type="ChEBI" id="CHEBI:37565"/>
    </ligand>
</feature>
<feature type="binding site" evidence="2">
    <location>
        <begin position="63"/>
        <end position="69"/>
    </location>
    <ligand>
        <name>GTP</name>
        <dbReference type="ChEBI" id="CHEBI:37565"/>
    </ligand>
</feature>
<feature type="binding site" evidence="2">
    <location>
        <begin position="91"/>
        <end position="95"/>
    </location>
    <ligand>
        <name>GTP</name>
        <dbReference type="ChEBI" id="CHEBI:37565"/>
    </ligand>
</feature>
<feature type="binding site" evidence="2">
    <location>
        <begin position="152"/>
        <end position="155"/>
    </location>
    <ligand>
        <name>GTP</name>
        <dbReference type="ChEBI" id="CHEBI:37565"/>
    </ligand>
</feature>
<feature type="binding site" evidence="2">
    <location>
        <begin position="182"/>
        <end position="183"/>
    </location>
    <ligand>
        <name>GTP</name>
        <dbReference type="ChEBI" id="CHEBI:37565"/>
    </ligand>
</feature>
<feature type="modified residue" description="Cysteine methyl ester" evidence="3">
    <location>
        <position position="226"/>
    </location>
</feature>
<feature type="lipid moiety-binding region" description="S-geranylgeranyl cysteine" evidence="1">
    <location>
        <position position="226"/>
    </location>
</feature>
<feature type="helix" evidence="5">
    <location>
        <begin position="102"/>
        <end position="108"/>
    </location>
</feature>
<reference key="1">
    <citation type="journal article" date="1999" name="Proc. Natl. Acad. Sci. U.S.A.">
        <title>NOEY2 (ARHI), an imprinted putative tumor suppressor gene in ovarian and breast carcinomas.</title>
        <authorList>
            <person name="Yu Y.H."/>
            <person name="Xu F.J."/>
            <person name="Peng H."/>
            <person name="Fang X."/>
            <person name="Zhao S."/>
            <person name="Li Y."/>
            <person name="Cuevas B."/>
            <person name="Kuo W.-L."/>
            <person name="Gray J.W."/>
            <person name="Siciliano M."/>
            <person name="Mills G.B."/>
            <person name="Bast R.C. Jr."/>
        </authorList>
    </citation>
    <scope>NUCLEOTIDE SEQUENCE [MRNA]</scope>
</reference>
<reference key="2">
    <citation type="journal article" date="2001" name="Biochim. Biophys. Acta">
        <title>Genomic structure and promoter characterization of an imprinted tumor suppressor gene ARHI.</title>
        <authorList>
            <person name="Luo R.Z."/>
            <person name="Peng H."/>
            <person name="Xu F."/>
            <person name="Bao J."/>
            <person name="Pang Y."/>
            <person name="Pershad R."/>
            <person name="Issa J.P."/>
            <person name="Liao W.S."/>
            <person name="Bast R.C. Jr."/>
            <person name="Yu Y."/>
        </authorList>
    </citation>
    <scope>NUCLEOTIDE SEQUENCE [GENOMIC DNA]</scope>
</reference>
<reference key="3">
    <citation type="submission" date="2004-06" db="EMBL/GenBank/DDBJ databases">
        <title>Cloning of human full open reading frames in Gateway(TM) system entry vector (pDONR201).</title>
        <authorList>
            <person name="Halleck A."/>
            <person name="Ebert L."/>
            <person name="Mkoundinya M."/>
            <person name="Schick M."/>
            <person name="Eisenstein S."/>
            <person name="Neubert P."/>
            <person name="Kstrang K."/>
            <person name="Schatten R."/>
            <person name="Shen B."/>
            <person name="Henze S."/>
            <person name="Mar W."/>
            <person name="Korn B."/>
            <person name="Zuo D."/>
            <person name="Hu Y."/>
            <person name="LaBaer J."/>
        </authorList>
    </citation>
    <scope>NUCLEOTIDE SEQUENCE [LARGE SCALE MRNA]</scope>
</reference>
<reference key="4">
    <citation type="journal article" date="2004" name="Nat. Genet.">
        <title>Complete sequencing and characterization of 21,243 full-length human cDNAs.</title>
        <authorList>
            <person name="Ota T."/>
            <person name="Suzuki Y."/>
            <person name="Nishikawa T."/>
            <person name="Otsuki T."/>
            <person name="Sugiyama T."/>
            <person name="Irie R."/>
            <person name="Wakamatsu A."/>
            <person name="Hayashi K."/>
            <person name="Sato H."/>
            <person name="Nagai K."/>
            <person name="Kimura K."/>
            <person name="Makita H."/>
            <person name="Sekine M."/>
            <person name="Obayashi M."/>
            <person name="Nishi T."/>
            <person name="Shibahara T."/>
            <person name="Tanaka T."/>
            <person name="Ishii S."/>
            <person name="Yamamoto J."/>
            <person name="Saito K."/>
            <person name="Kawai Y."/>
            <person name="Isono Y."/>
            <person name="Nakamura Y."/>
            <person name="Nagahari K."/>
            <person name="Murakami K."/>
            <person name="Yasuda T."/>
            <person name="Iwayanagi T."/>
            <person name="Wagatsuma M."/>
            <person name="Shiratori A."/>
            <person name="Sudo H."/>
            <person name="Hosoiri T."/>
            <person name="Kaku Y."/>
            <person name="Kodaira H."/>
            <person name="Kondo H."/>
            <person name="Sugawara M."/>
            <person name="Takahashi M."/>
            <person name="Kanda K."/>
            <person name="Yokoi T."/>
            <person name="Furuya T."/>
            <person name="Kikkawa E."/>
            <person name="Omura Y."/>
            <person name="Abe K."/>
            <person name="Kamihara K."/>
            <person name="Katsuta N."/>
            <person name="Sato K."/>
            <person name="Tanikawa M."/>
            <person name="Yamazaki M."/>
            <person name="Ninomiya K."/>
            <person name="Ishibashi T."/>
            <person name="Yamashita H."/>
            <person name="Murakawa K."/>
            <person name="Fujimori K."/>
            <person name="Tanai H."/>
            <person name="Kimata M."/>
            <person name="Watanabe M."/>
            <person name="Hiraoka S."/>
            <person name="Chiba Y."/>
            <person name="Ishida S."/>
            <person name="Ono Y."/>
            <person name="Takiguchi S."/>
            <person name="Watanabe S."/>
            <person name="Yosida M."/>
            <person name="Hotuta T."/>
            <person name="Kusano J."/>
            <person name="Kanehori K."/>
            <person name="Takahashi-Fujii A."/>
            <person name="Hara H."/>
            <person name="Tanase T.-O."/>
            <person name="Nomura Y."/>
            <person name="Togiya S."/>
            <person name="Komai F."/>
            <person name="Hara R."/>
            <person name="Takeuchi K."/>
            <person name="Arita M."/>
            <person name="Imose N."/>
            <person name="Musashino K."/>
            <person name="Yuuki H."/>
            <person name="Oshima A."/>
            <person name="Sasaki N."/>
            <person name="Aotsuka S."/>
            <person name="Yoshikawa Y."/>
            <person name="Matsunawa H."/>
            <person name="Ichihara T."/>
            <person name="Shiohata N."/>
            <person name="Sano S."/>
            <person name="Moriya S."/>
            <person name="Momiyama H."/>
            <person name="Satoh N."/>
            <person name="Takami S."/>
            <person name="Terashima Y."/>
            <person name="Suzuki O."/>
            <person name="Nakagawa S."/>
            <person name="Senoh A."/>
            <person name="Mizoguchi H."/>
            <person name="Goto Y."/>
            <person name="Shimizu F."/>
            <person name="Wakebe H."/>
            <person name="Hishigaki H."/>
            <person name="Watanabe T."/>
            <person name="Sugiyama A."/>
            <person name="Takemoto M."/>
            <person name="Kawakami B."/>
            <person name="Yamazaki M."/>
            <person name="Watanabe K."/>
            <person name="Kumagai A."/>
            <person name="Itakura S."/>
            <person name="Fukuzumi Y."/>
            <person name="Fujimori Y."/>
            <person name="Komiyama M."/>
            <person name="Tashiro H."/>
            <person name="Tanigami A."/>
            <person name="Fujiwara T."/>
            <person name="Ono T."/>
            <person name="Yamada K."/>
            <person name="Fujii Y."/>
            <person name="Ozaki K."/>
            <person name="Hirao M."/>
            <person name="Ohmori Y."/>
            <person name="Kawabata A."/>
            <person name="Hikiji T."/>
            <person name="Kobatake N."/>
            <person name="Inagaki H."/>
            <person name="Ikema Y."/>
            <person name="Okamoto S."/>
            <person name="Okitani R."/>
            <person name="Kawakami T."/>
            <person name="Noguchi S."/>
            <person name="Itoh T."/>
            <person name="Shigeta K."/>
            <person name="Senba T."/>
            <person name="Matsumura K."/>
            <person name="Nakajima Y."/>
            <person name="Mizuno T."/>
            <person name="Morinaga M."/>
            <person name="Sasaki M."/>
            <person name="Togashi T."/>
            <person name="Oyama M."/>
            <person name="Hata H."/>
            <person name="Watanabe M."/>
            <person name="Komatsu T."/>
            <person name="Mizushima-Sugano J."/>
            <person name="Satoh T."/>
            <person name="Shirai Y."/>
            <person name="Takahashi Y."/>
            <person name="Nakagawa K."/>
            <person name="Okumura K."/>
            <person name="Nagase T."/>
            <person name="Nomura N."/>
            <person name="Kikuchi H."/>
            <person name="Masuho Y."/>
            <person name="Yamashita R."/>
            <person name="Nakai K."/>
            <person name="Yada T."/>
            <person name="Nakamura Y."/>
            <person name="Ohara O."/>
            <person name="Isogai T."/>
            <person name="Sugano S."/>
        </authorList>
    </citation>
    <scope>NUCLEOTIDE SEQUENCE [LARGE SCALE MRNA]</scope>
    <source>
        <tissue>Embryo</tissue>
    </source>
</reference>
<reference key="5">
    <citation type="journal article" date="2006" name="Nature">
        <title>The DNA sequence and biological annotation of human chromosome 1.</title>
        <authorList>
            <person name="Gregory S.G."/>
            <person name="Barlow K.F."/>
            <person name="McLay K.E."/>
            <person name="Kaul R."/>
            <person name="Swarbreck D."/>
            <person name="Dunham A."/>
            <person name="Scott C.E."/>
            <person name="Howe K.L."/>
            <person name="Woodfine K."/>
            <person name="Spencer C.C.A."/>
            <person name="Jones M.C."/>
            <person name="Gillson C."/>
            <person name="Searle S."/>
            <person name="Zhou Y."/>
            <person name="Kokocinski F."/>
            <person name="McDonald L."/>
            <person name="Evans R."/>
            <person name="Phillips K."/>
            <person name="Atkinson A."/>
            <person name="Cooper R."/>
            <person name="Jones C."/>
            <person name="Hall R.E."/>
            <person name="Andrews T.D."/>
            <person name="Lloyd C."/>
            <person name="Ainscough R."/>
            <person name="Almeida J.P."/>
            <person name="Ambrose K.D."/>
            <person name="Anderson F."/>
            <person name="Andrew R.W."/>
            <person name="Ashwell R.I.S."/>
            <person name="Aubin K."/>
            <person name="Babbage A.K."/>
            <person name="Bagguley C.L."/>
            <person name="Bailey J."/>
            <person name="Beasley H."/>
            <person name="Bethel G."/>
            <person name="Bird C.P."/>
            <person name="Bray-Allen S."/>
            <person name="Brown J.Y."/>
            <person name="Brown A.J."/>
            <person name="Buckley D."/>
            <person name="Burton J."/>
            <person name="Bye J."/>
            <person name="Carder C."/>
            <person name="Chapman J.C."/>
            <person name="Clark S.Y."/>
            <person name="Clarke G."/>
            <person name="Clee C."/>
            <person name="Cobley V."/>
            <person name="Collier R.E."/>
            <person name="Corby N."/>
            <person name="Coville G.J."/>
            <person name="Davies J."/>
            <person name="Deadman R."/>
            <person name="Dunn M."/>
            <person name="Earthrowl M."/>
            <person name="Ellington A.G."/>
            <person name="Errington H."/>
            <person name="Frankish A."/>
            <person name="Frankland J."/>
            <person name="French L."/>
            <person name="Garner P."/>
            <person name="Garnett J."/>
            <person name="Gay L."/>
            <person name="Ghori M.R.J."/>
            <person name="Gibson R."/>
            <person name="Gilby L.M."/>
            <person name="Gillett W."/>
            <person name="Glithero R.J."/>
            <person name="Grafham D.V."/>
            <person name="Griffiths C."/>
            <person name="Griffiths-Jones S."/>
            <person name="Grocock R."/>
            <person name="Hammond S."/>
            <person name="Harrison E.S.I."/>
            <person name="Hart E."/>
            <person name="Haugen E."/>
            <person name="Heath P.D."/>
            <person name="Holmes S."/>
            <person name="Holt K."/>
            <person name="Howden P.J."/>
            <person name="Hunt A.R."/>
            <person name="Hunt S.E."/>
            <person name="Hunter G."/>
            <person name="Isherwood J."/>
            <person name="James R."/>
            <person name="Johnson C."/>
            <person name="Johnson D."/>
            <person name="Joy A."/>
            <person name="Kay M."/>
            <person name="Kershaw J.K."/>
            <person name="Kibukawa M."/>
            <person name="Kimberley A.M."/>
            <person name="King A."/>
            <person name="Knights A.J."/>
            <person name="Lad H."/>
            <person name="Laird G."/>
            <person name="Lawlor S."/>
            <person name="Leongamornlert D.A."/>
            <person name="Lloyd D.M."/>
            <person name="Loveland J."/>
            <person name="Lovell J."/>
            <person name="Lush M.J."/>
            <person name="Lyne R."/>
            <person name="Martin S."/>
            <person name="Mashreghi-Mohammadi M."/>
            <person name="Matthews L."/>
            <person name="Matthews N.S.W."/>
            <person name="McLaren S."/>
            <person name="Milne S."/>
            <person name="Mistry S."/>
            <person name="Moore M.J.F."/>
            <person name="Nickerson T."/>
            <person name="O'Dell C.N."/>
            <person name="Oliver K."/>
            <person name="Palmeiri A."/>
            <person name="Palmer S.A."/>
            <person name="Parker A."/>
            <person name="Patel D."/>
            <person name="Pearce A.V."/>
            <person name="Peck A.I."/>
            <person name="Pelan S."/>
            <person name="Phelps K."/>
            <person name="Phillimore B.J."/>
            <person name="Plumb R."/>
            <person name="Rajan J."/>
            <person name="Raymond C."/>
            <person name="Rouse G."/>
            <person name="Saenphimmachak C."/>
            <person name="Sehra H.K."/>
            <person name="Sheridan E."/>
            <person name="Shownkeen R."/>
            <person name="Sims S."/>
            <person name="Skuce C.D."/>
            <person name="Smith M."/>
            <person name="Steward C."/>
            <person name="Subramanian S."/>
            <person name="Sycamore N."/>
            <person name="Tracey A."/>
            <person name="Tromans A."/>
            <person name="Van Helmond Z."/>
            <person name="Wall M."/>
            <person name="Wallis J.M."/>
            <person name="White S."/>
            <person name="Whitehead S.L."/>
            <person name="Wilkinson J.E."/>
            <person name="Willey D.L."/>
            <person name="Williams H."/>
            <person name="Wilming L."/>
            <person name="Wray P.W."/>
            <person name="Wu Z."/>
            <person name="Coulson A."/>
            <person name="Vaudin M."/>
            <person name="Sulston J.E."/>
            <person name="Durbin R.M."/>
            <person name="Hubbard T."/>
            <person name="Wooster R."/>
            <person name="Dunham I."/>
            <person name="Carter N.P."/>
            <person name="McVean G."/>
            <person name="Ross M.T."/>
            <person name="Harrow J."/>
            <person name="Olson M.V."/>
            <person name="Beck S."/>
            <person name="Rogers J."/>
            <person name="Bentley D.R."/>
        </authorList>
    </citation>
    <scope>NUCLEOTIDE SEQUENCE [LARGE SCALE GENOMIC DNA]</scope>
</reference>
<reference key="6">
    <citation type="submission" date="2005-09" db="EMBL/GenBank/DDBJ databases">
        <authorList>
            <person name="Mural R.J."/>
            <person name="Istrail S."/>
            <person name="Sutton G.G."/>
            <person name="Florea L."/>
            <person name="Halpern A.L."/>
            <person name="Mobarry C.M."/>
            <person name="Lippert R."/>
            <person name="Walenz B."/>
            <person name="Shatkay H."/>
            <person name="Dew I."/>
            <person name="Miller J.R."/>
            <person name="Flanigan M.J."/>
            <person name="Edwards N.J."/>
            <person name="Bolanos R."/>
            <person name="Fasulo D."/>
            <person name="Halldorsson B.V."/>
            <person name="Hannenhalli S."/>
            <person name="Turner R."/>
            <person name="Yooseph S."/>
            <person name="Lu F."/>
            <person name="Nusskern D.R."/>
            <person name="Shue B.C."/>
            <person name="Zheng X.H."/>
            <person name="Zhong F."/>
            <person name="Delcher A.L."/>
            <person name="Huson D.H."/>
            <person name="Kravitz S.A."/>
            <person name="Mouchard L."/>
            <person name="Reinert K."/>
            <person name="Remington K.A."/>
            <person name="Clark A.G."/>
            <person name="Waterman M.S."/>
            <person name="Eichler E.E."/>
            <person name="Adams M.D."/>
            <person name="Hunkapiller M.W."/>
            <person name="Myers E.W."/>
            <person name="Venter J.C."/>
        </authorList>
    </citation>
    <scope>NUCLEOTIDE SEQUENCE [LARGE SCALE GENOMIC DNA]</scope>
</reference>
<reference key="7">
    <citation type="journal article" date="2004" name="Genome Res.">
        <title>The status, quality, and expansion of the NIH full-length cDNA project: the Mammalian Gene Collection (MGC).</title>
        <authorList>
            <consortium name="The MGC Project Team"/>
        </authorList>
    </citation>
    <scope>NUCLEOTIDE SEQUENCE [LARGE SCALE MRNA]</scope>
    <source>
        <tissue>Bone marrow</tissue>
    </source>
</reference>
<sequence>MGNASFGSKEQKLLKRLRLLPALLILRAFKPHRKIRDYRVVVVGTAGVGKSTLLHKWASGNFRHEYLPTIENTYCQLLGCSHGVLSLHITDSKSGDGNRALQRHVIARGHAFVLVYSVTKKETLEELKAFYELICKIKGNNLHKFPIVLVGNKSDDTHREVALNDGATCAMEWNCAFMEISAKTDVNVQELFHMLLNYKKKPTTGLQEPEKKSQMPNTTEKLLDKCIIM</sequence>
<evidence type="ECO:0000250" key="1"/>
<evidence type="ECO:0000250" key="2">
    <source>
        <dbReference type="UniProtKB" id="Q96HU8"/>
    </source>
</evidence>
<evidence type="ECO:0000255" key="3"/>
<evidence type="ECO:0000305" key="4"/>
<evidence type="ECO:0007829" key="5">
    <source>
        <dbReference type="PDB" id="6NAZ"/>
    </source>
</evidence>
<gene>
    <name type="primary">DIRAS3</name>
    <name type="synonym">ARHI</name>
    <name type="synonym">NOEY2</name>
    <name type="synonym">RHOI</name>
</gene>
<dbReference type="EMBL" id="U96750">
    <property type="protein sequence ID" value="AAD03164.1"/>
    <property type="molecule type" value="mRNA"/>
</dbReference>
<dbReference type="EMBL" id="AF202543">
    <property type="protein sequence ID" value="AAG35625.1"/>
    <property type="molecule type" value="Genomic_DNA"/>
</dbReference>
<dbReference type="EMBL" id="CR541870">
    <property type="protein sequence ID" value="CAG46668.1"/>
    <property type="molecule type" value="mRNA"/>
</dbReference>
<dbReference type="EMBL" id="CR541892">
    <property type="protein sequence ID" value="CAG46690.1"/>
    <property type="molecule type" value="mRNA"/>
</dbReference>
<dbReference type="EMBL" id="AK021882">
    <property type="protein sequence ID" value="BAG51055.1"/>
    <property type="molecule type" value="mRNA"/>
</dbReference>
<dbReference type="EMBL" id="AL157407">
    <property type="status" value="NOT_ANNOTATED_CDS"/>
    <property type="molecule type" value="Genomic_DNA"/>
</dbReference>
<dbReference type="EMBL" id="CH471059">
    <property type="protein sequence ID" value="EAX06483.1"/>
    <property type="molecule type" value="Genomic_DNA"/>
</dbReference>
<dbReference type="EMBL" id="BC005362">
    <property type="protein sequence ID" value="AAH05362.1"/>
    <property type="molecule type" value="mRNA"/>
</dbReference>
<dbReference type="CCDS" id="CCDS641.1"/>
<dbReference type="RefSeq" id="NP_004666.1">
    <property type="nucleotide sequence ID" value="NM_004675.5"/>
</dbReference>
<dbReference type="RefSeq" id="XP_016858262.1">
    <property type="nucleotide sequence ID" value="XM_017002773.1"/>
</dbReference>
<dbReference type="PDB" id="6NAZ">
    <property type="method" value="X-ray"/>
    <property type="resolution" value="3.08 A"/>
    <property type="chains" value="A=92-112"/>
</dbReference>
<dbReference type="PDBsum" id="6NAZ"/>
<dbReference type="SMR" id="O95661"/>
<dbReference type="BioGRID" id="114534">
    <property type="interactions" value="262"/>
</dbReference>
<dbReference type="FunCoup" id="O95661">
    <property type="interactions" value="171"/>
</dbReference>
<dbReference type="IntAct" id="O95661">
    <property type="interactions" value="20"/>
</dbReference>
<dbReference type="MINT" id="O95661"/>
<dbReference type="STRING" id="9606.ENSP00000360020"/>
<dbReference type="iPTMnet" id="O95661"/>
<dbReference type="PhosphoSitePlus" id="O95661"/>
<dbReference type="BioMuta" id="DIRAS3"/>
<dbReference type="MassIVE" id="O95661"/>
<dbReference type="PaxDb" id="9606-ENSP00000360020"/>
<dbReference type="PeptideAtlas" id="O95661"/>
<dbReference type="ProteomicsDB" id="50981"/>
<dbReference type="Antibodypedia" id="33414">
    <property type="antibodies" value="174 antibodies from 27 providers"/>
</dbReference>
<dbReference type="DNASU" id="9077"/>
<dbReference type="Ensembl" id="ENST00000370981.3">
    <property type="protein sequence ID" value="ENSP00000360020.1"/>
    <property type="gene ID" value="ENSG00000162595.8"/>
</dbReference>
<dbReference type="Ensembl" id="ENST00000646789.1">
    <property type="protein sequence ID" value="ENSP00000495736.1"/>
    <property type="gene ID" value="ENSG00000162595.8"/>
</dbReference>
<dbReference type="Ensembl" id="ENST00000691269.1">
    <property type="protein sequence ID" value="ENSP00000509833.1"/>
    <property type="gene ID" value="ENSG00000162595.8"/>
</dbReference>
<dbReference type="Ensembl" id="ENST00000693623.1">
    <property type="protein sequence ID" value="ENSP00000510070.1"/>
    <property type="gene ID" value="ENSG00000162595.8"/>
</dbReference>
<dbReference type="GeneID" id="9077"/>
<dbReference type="KEGG" id="hsa:9077"/>
<dbReference type="MANE-Select" id="ENST00000646789.1">
    <property type="protein sequence ID" value="ENSP00000495736.1"/>
    <property type="RefSeq nucleotide sequence ID" value="NM_004675.5"/>
    <property type="RefSeq protein sequence ID" value="NP_004666.1"/>
</dbReference>
<dbReference type="UCSC" id="uc001ded.4">
    <property type="organism name" value="human"/>
</dbReference>
<dbReference type="AGR" id="HGNC:687"/>
<dbReference type="CTD" id="9077"/>
<dbReference type="DisGeNET" id="9077"/>
<dbReference type="GeneCards" id="DIRAS3"/>
<dbReference type="HGNC" id="HGNC:687">
    <property type="gene designation" value="DIRAS3"/>
</dbReference>
<dbReference type="HPA" id="ENSG00000162595">
    <property type="expression patterns" value="Group enriched (brain, ovary, pituitary gland)"/>
</dbReference>
<dbReference type="MIM" id="605193">
    <property type="type" value="gene"/>
</dbReference>
<dbReference type="neXtProt" id="NX_O95661"/>
<dbReference type="OpenTargets" id="ENSG00000162595"/>
<dbReference type="PharmGKB" id="PA24980"/>
<dbReference type="VEuPathDB" id="HostDB:ENSG00000162595"/>
<dbReference type="eggNOG" id="KOG0395">
    <property type="taxonomic scope" value="Eukaryota"/>
</dbReference>
<dbReference type="GeneTree" id="ENSGT00940000164094"/>
<dbReference type="HOGENOM" id="CLU_041217_9_8_1"/>
<dbReference type="InParanoid" id="O95661"/>
<dbReference type="OMA" id="RALEWNC"/>
<dbReference type="OrthoDB" id="265044at2759"/>
<dbReference type="PAN-GO" id="O95661">
    <property type="GO annotations" value="4 GO annotations based on evolutionary models"/>
</dbReference>
<dbReference type="PhylomeDB" id="O95661"/>
<dbReference type="TreeFam" id="TF313014"/>
<dbReference type="PathwayCommons" id="O95661"/>
<dbReference type="SignaLink" id="O95661"/>
<dbReference type="BioGRID-ORCS" id="9077">
    <property type="hits" value="43 hits in 1154 CRISPR screens"/>
</dbReference>
<dbReference type="GenomeRNAi" id="9077"/>
<dbReference type="Pharos" id="O95661">
    <property type="development level" value="Tbio"/>
</dbReference>
<dbReference type="PRO" id="PR:O95661"/>
<dbReference type="Proteomes" id="UP000005640">
    <property type="component" value="Chromosome 1"/>
</dbReference>
<dbReference type="RNAct" id="O95661">
    <property type="molecule type" value="protein"/>
</dbReference>
<dbReference type="Bgee" id="ENSG00000162595">
    <property type="expression patterns" value="Expressed in adenohypophysis and 133 other cell types or tissues"/>
</dbReference>
<dbReference type="GO" id="GO:0005886">
    <property type="term" value="C:plasma membrane"/>
    <property type="evidence" value="ECO:0000318"/>
    <property type="project" value="GO_Central"/>
</dbReference>
<dbReference type="GO" id="GO:0019003">
    <property type="term" value="F:GDP binding"/>
    <property type="evidence" value="ECO:0000318"/>
    <property type="project" value="GO_Central"/>
</dbReference>
<dbReference type="GO" id="GO:0005525">
    <property type="term" value="F:GTP binding"/>
    <property type="evidence" value="ECO:0000318"/>
    <property type="project" value="GO_Central"/>
</dbReference>
<dbReference type="GO" id="GO:0003924">
    <property type="term" value="F:GTPase activity"/>
    <property type="evidence" value="ECO:0000318"/>
    <property type="project" value="GO_Central"/>
</dbReference>
<dbReference type="GO" id="GO:0071514">
    <property type="term" value="P:genomic imprinting"/>
    <property type="evidence" value="ECO:0000304"/>
    <property type="project" value="ProtInc"/>
</dbReference>
<dbReference type="GO" id="GO:0000079">
    <property type="term" value="P:regulation of cyclin-dependent protein serine/threonine kinase activity"/>
    <property type="evidence" value="ECO:0000304"/>
    <property type="project" value="ProtInc"/>
</dbReference>
<dbReference type="GO" id="GO:0007264">
    <property type="term" value="P:small GTPase-mediated signal transduction"/>
    <property type="evidence" value="ECO:0000304"/>
    <property type="project" value="ProtInc"/>
</dbReference>
<dbReference type="FunFam" id="3.40.50.300:FF:000475">
    <property type="entry name" value="GTP-binding protein Rhes"/>
    <property type="match status" value="1"/>
</dbReference>
<dbReference type="Gene3D" id="3.40.50.300">
    <property type="entry name" value="P-loop containing nucleotide triphosphate hydrolases"/>
    <property type="match status" value="1"/>
</dbReference>
<dbReference type="InterPro" id="IPR027417">
    <property type="entry name" value="P-loop_NTPase"/>
</dbReference>
<dbReference type="InterPro" id="IPR005225">
    <property type="entry name" value="Small_GTP-bd"/>
</dbReference>
<dbReference type="InterPro" id="IPR001806">
    <property type="entry name" value="Small_GTPase"/>
</dbReference>
<dbReference type="InterPro" id="IPR020849">
    <property type="entry name" value="Small_GTPase_Ras-type"/>
</dbReference>
<dbReference type="NCBIfam" id="TIGR00231">
    <property type="entry name" value="small_GTP"/>
    <property type="match status" value="1"/>
</dbReference>
<dbReference type="PANTHER" id="PTHR24070">
    <property type="entry name" value="RAS, DI-RAS, AND RHEB FAMILY MEMBERS OF SMALL GTPASE SUPERFAMILY"/>
    <property type="match status" value="1"/>
</dbReference>
<dbReference type="Pfam" id="PF00071">
    <property type="entry name" value="Ras"/>
    <property type="match status" value="1"/>
</dbReference>
<dbReference type="PRINTS" id="PR00449">
    <property type="entry name" value="RASTRNSFRMNG"/>
</dbReference>
<dbReference type="SMART" id="SM00175">
    <property type="entry name" value="RAB"/>
    <property type="match status" value="1"/>
</dbReference>
<dbReference type="SMART" id="SM00173">
    <property type="entry name" value="RAS"/>
    <property type="match status" value="1"/>
</dbReference>
<dbReference type="SMART" id="SM00174">
    <property type="entry name" value="RHO"/>
    <property type="match status" value="1"/>
</dbReference>
<dbReference type="SUPFAM" id="SSF52540">
    <property type="entry name" value="P-loop containing nucleoside triphosphate hydrolases"/>
    <property type="match status" value="1"/>
</dbReference>
<dbReference type="PROSITE" id="PS51421">
    <property type="entry name" value="RAS"/>
    <property type="match status" value="1"/>
</dbReference>